<reference key="1">
    <citation type="journal article" date="2001" name="Lancet">
        <title>Whole genome sequencing of meticillin-resistant Staphylococcus aureus.</title>
        <authorList>
            <person name="Kuroda M."/>
            <person name="Ohta T."/>
            <person name="Uchiyama I."/>
            <person name="Baba T."/>
            <person name="Yuzawa H."/>
            <person name="Kobayashi I."/>
            <person name="Cui L."/>
            <person name="Oguchi A."/>
            <person name="Aoki K."/>
            <person name="Nagai Y."/>
            <person name="Lian J.-Q."/>
            <person name="Ito T."/>
            <person name="Kanamori M."/>
            <person name="Matsumaru H."/>
            <person name="Maruyama A."/>
            <person name="Murakami H."/>
            <person name="Hosoyama A."/>
            <person name="Mizutani-Ui Y."/>
            <person name="Takahashi N.K."/>
            <person name="Sawano T."/>
            <person name="Inoue R."/>
            <person name="Kaito C."/>
            <person name="Sekimizu K."/>
            <person name="Hirakawa H."/>
            <person name="Kuhara S."/>
            <person name="Goto S."/>
            <person name="Yabuzaki J."/>
            <person name="Kanehisa M."/>
            <person name="Yamashita A."/>
            <person name="Oshima K."/>
            <person name="Furuya K."/>
            <person name="Yoshino C."/>
            <person name="Shiba T."/>
            <person name="Hattori M."/>
            <person name="Ogasawara N."/>
            <person name="Hayashi H."/>
            <person name="Hiramatsu K."/>
        </authorList>
    </citation>
    <scope>NUCLEOTIDE SEQUENCE [LARGE SCALE GENOMIC DNA]</scope>
    <source>
        <strain>N315</strain>
    </source>
</reference>
<reference key="2">
    <citation type="journal article" date="2005" name="J. Microbiol. Methods">
        <title>Correlation of proteomic and transcriptomic profiles of Staphylococcus aureus during the post-exponential phase of growth.</title>
        <authorList>
            <person name="Scherl A."/>
            <person name="Francois P."/>
            <person name="Bento M."/>
            <person name="Deshusses J.M."/>
            <person name="Charbonnier Y."/>
            <person name="Converset V."/>
            <person name="Huyghe A."/>
            <person name="Walter N."/>
            <person name="Hoogland C."/>
            <person name="Appel R.D."/>
            <person name="Sanchez J.-C."/>
            <person name="Zimmermann-Ivol C.G."/>
            <person name="Corthals G.L."/>
            <person name="Hochstrasser D.F."/>
            <person name="Schrenzel J."/>
        </authorList>
    </citation>
    <scope>IDENTIFICATION BY MASS SPECTROMETRY</scope>
    <source>
        <strain>N315</strain>
    </source>
</reference>
<reference key="3">
    <citation type="submission" date="2007-10" db="UniProtKB">
        <title>Shotgun proteomic analysis of total and membrane protein extracts of S. aureus strain N315.</title>
        <authorList>
            <person name="Vaezzadeh A.R."/>
            <person name="Deshusses J."/>
            <person name="Lescuyer P."/>
            <person name="Hochstrasser D.F."/>
        </authorList>
    </citation>
    <scope>IDENTIFICATION BY MASS SPECTROMETRY [LARGE SCALE ANALYSIS]</scope>
    <source>
        <strain>N315</strain>
    </source>
</reference>
<sequence length="407" mass="45137">MTTFSEKEKIQLLADIVELQTENNNEIDVCNYLKDLFDKYDIKSEILKVNEHRANIVAEIGNGSPILALSGHMDVVDAGNQDNWTYPPFQLTEKAGKLYGRGTTDMKGGLMALVITLIELKEQNQLPQGTIRLLATAGEEKEQEGAKLLADKGYLDDVDGLIIAEPTGSGIYYAHKGSMSCKVTATGKAVHSSVPFIGDNAIDTLLEFYNQFKEKYSELKKHDTKHELDVAPMFKSLIGKEISEEDANYASGLTAVCSIINGGKQFNSVPDEASLEFNVRPVPEYDNDFIESFFQNIINDVDSNKLSLDIPSNHRPVTSDKNSKLITTIKDVASSYVEQDEIFVSALVGATDASSFLGDNKDNVDLAIFGPGNPLMAHQIDEYIEKDMYLKYIDIFKEASIQYLKEK</sequence>
<feature type="chain" id="PRO_0000185265" description="Probable succinyl-diaminopimelate desuccinylase">
    <location>
        <begin position="1"/>
        <end position="407"/>
    </location>
</feature>
<feature type="active site" evidence="1">
    <location>
        <position position="74"/>
    </location>
</feature>
<feature type="active site" description="Proton acceptor" evidence="1">
    <location>
        <position position="139"/>
    </location>
</feature>
<feature type="binding site" evidence="1">
    <location>
        <position position="72"/>
    </location>
    <ligand>
        <name>Zn(2+)</name>
        <dbReference type="ChEBI" id="CHEBI:29105"/>
        <label>1</label>
    </ligand>
</feature>
<feature type="binding site" evidence="1">
    <location>
        <position position="105"/>
    </location>
    <ligand>
        <name>Zn(2+)</name>
        <dbReference type="ChEBI" id="CHEBI:29105"/>
        <label>1</label>
    </ligand>
</feature>
<feature type="binding site" evidence="1">
    <location>
        <position position="105"/>
    </location>
    <ligand>
        <name>Zn(2+)</name>
        <dbReference type="ChEBI" id="CHEBI:29105"/>
        <label>2</label>
    </ligand>
</feature>
<feature type="binding site" evidence="1">
    <location>
        <position position="140"/>
    </location>
    <ligand>
        <name>Zn(2+)</name>
        <dbReference type="ChEBI" id="CHEBI:29105"/>
        <label>2</label>
    </ligand>
</feature>
<feature type="binding site" evidence="1">
    <location>
        <position position="165"/>
    </location>
    <ligand>
        <name>Zn(2+)</name>
        <dbReference type="ChEBI" id="CHEBI:29105"/>
        <label>1</label>
    </ligand>
</feature>
<feature type="binding site" evidence="1">
    <location>
        <position position="378"/>
    </location>
    <ligand>
        <name>Zn(2+)</name>
        <dbReference type="ChEBI" id="CHEBI:29105"/>
        <label>2</label>
    </ligand>
</feature>
<protein>
    <recommendedName>
        <fullName>Probable succinyl-diaminopimelate desuccinylase</fullName>
        <shortName>SDAP desuccinylase</shortName>
        <ecNumber>3.5.1.18</ecNumber>
    </recommendedName>
</protein>
<keyword id="KW-0028">Amino-acid biosynthesis</keyword>
<keyword id="KW-0170">Cobalt</keyword>
<keyword id="KW-0220">Diaminopimelate biosynthesis</keyword>
<keyword id="KW-0378">Hydrolase</keyword>
<keyword id="KW-0457">Lysine biosynthesis</keyword>
<keyword id="KW-0479">Metal-binding</keyword>
<keyword id="KW-0862">Zinc</keyword>
<dbReference type="EC" id="3.5.1.18"/>
<dbReference type="EMBL" id="BA000018">
    <property type="protein sequence ID" value="BAB43094.1"/>
    <property type="molecule type" value="Genomic_DNA"/>
</dbReference>
<dbReference type="PIR" id="E89991">
    <property type="entry name" value="E89991"/>
</dbReference>
<dbReference type="RefSeq" id="WP_000206625.1">
    <property type="nucleotide sequence ID" value="NC_002745.2"/>
</dbReference>
<dbReference type="SMR" id="Q99SN6"/>
<dbReference type="EnsemblBacteria" id="BAB43094">
    <property type="protein sequence ID" value="BAB43094"/>
    <property type="gene ID" value="BAB43094"/>
</dbReference>
<dbReference type="KEGG" id="sau:SA1814"/>
<dbReference type="HOGENOM" id="CLU_021802_2_2_9"/>
<dbReference type="UniPathway" id="UPA00034">
    <property type="reaction ID" value="UER00021"/>
</dbReference>
<dbReference type="GO" id="GO:0046872">
    <property type="term" value="F:metal ion binding"/>
    <property type="evidence" value="ECO:0007669"/>
    <property type="project" value="UniProtKB-KW"/>
</dbReference>
<dbReference type="GO" id="GO:0009014">
    <property type="term" value="F:succinyl-diaminopimelate desuccinylase activity"/>
    <property type="evidence" value="ECO:0007669"/>
    <property type="project" value="UniProtKB-EC"/>
</dbReference>
<dbReference type="GO" id="GO:0019877">
    <property type="term" value="P:diaminopimelate biosynthetic process"/>
    <property type="evidence" value="ECO:0007669"/>
    <property type="project" value="UniProtKB-KW"/>
</dbReference>
<dbReference type="GO" id="GO:0009089">
    <property type="term" value="P:lysine biosynthetic process via diaminopimelate"/>
    <property type="evidence" value="ECO:0007669"/>
    <property type="project" value="UniProtKB-UniPathway"/>
</dbReference>
<dbReference type="CDD" id="cd08659">
    <property type="entry name" value="M20_ArgE_DapE-like"/>
    <property type="match status" value="1"/>
</dbReference>
<dbReference type="Gene3D" id="3.30.70.360">
    <property type="match status" value="1"/>
</dbReference>
<dbReference type="Gene3D" id="3.40.630.10">
    <property type="entry name" value="Zn peptidases"/>
    <property type="match status" value="2"/>
</dbReference>
<dbReference type="InterPro" id="IPR010182">
    <property type="entry name" value="ArgE/DapE"/>
</dbReference>
<dbReference type="InterPro" id="IPR001261">
    <property type="entry name" value="ArgE/DapE_CS"/>
</dbReference>
<dbReference type="InterPro" id="IPR036264">
    <property type="entry name" value="Bact_exopeptidase_dim_dom"/>
</dbReference>
<dbReference type="InterPro" id="IPR002933">
    <property type="entry name" value="Peptidase_M20"/>
</dbReference>
<dbReference type="InterPro" id="IPR011650">
    <property type="entry name" value="Peptidase_M20_dimer"/>
</dbReference>
<dbReference type="InterPro" id="IPR050072">
    <property type="entry name" value="Peptidase_M20A"/>
</dbReference>
<dbReference type="NCBIfam" id="TIGR01910">
    <property type="entry name" value="DapE-ArgE"/>
    <property type="match status" value="1"/>
</dbReference>
<dbReference type="NCBIfam" id="NF006365">
    <property type="entry name" value="PRK08588.1"/>
    <property type="match status" value="1"/>
</dbReference>
<dbReference type="PANTHER" id="PTHR43808">
    <property type="entry name" value="ACETYLORNITHINE DEACETYLASE"/>
    <property type="match status" value="1"/>
</dbReference>
<dbReference type="PANTHER" id="PTHR43808:SF8">
    <property type="entry name" value="PEPTIDASE M20 DIMERISATION DOMAIN-CONTAINING PROTEIN"/>
    <property type="match status" value="1"/>
</dbReference>
<dbReference type="Pfam" id="PF07687">
    <property type="entry name" value="M20_dimer"/>
    <property type="match status" value="1"/>
</dbReference>
<dbReference type="Pfam" id="PF01546">
    <property type="entry name" value="Peptidase_M20"/>
    <property type="match status" value="1"/>
</dbReference>
<dbReference type="SUPFAM" id="SSF55031">
    <property type="entry name" value="Bacterial exopeptidase dimerisation domain"/>
    <property type="match status" value="1"/>
</dbReference>
<dbReference type="SUPFAM" id="SSF53187">
    <property type="entry name" value="Zn-dependent exopeptidases"/>
    <property type="match status" value="1"/>
</dbReference>
<dbReference type="PROSITE" id="PS00758">
    <property type="entry name" value="ARGE_DAPE_CPG2_1"/>
    <property type="match status" value="1"/>
</dbReference>
<dbReference type="PROSITE" id="PS00759">
    <property type="entry name" value="ARGE_DAPE_CPG2_2"/>
    <property type="match status" value="1"/>
</dbReference>
<evidence type="ECO:0000250" key="1"/>
<evidence type="ECO:0000305" key="2"/>
<proteinExistence type="evidence at protein level"/>
<organism>
    <name type="scientific">Staphylococcus aureus (strain N315)</name>
    <dbReference type="NCBI Taxonomy" id="158879"/>
    <lineage>
        <taxon>Bacteria</taxon>
        <taxon>Bacillati</taxon>
        <taxon>Bacillota</taxon>
        <taxon>Bacilli</taxon>
        <taxon>Bacillales</taxon>
        <taxon>Staphylococcaceae</taxon>
        <taxon>Staphylococcus</taxon>
    </lineage>
</organism>
<gene>
    <name type="primary">dapE</name>
    <name type="ordered locus">SA1814</name>
</gene>
<comment type="catalytic activity">
    <reaction>
        <text>N-succinyl-(2S,6S)-2,6-diaminopimelate + H2O = (2S,6S)-2,6-diaminopimelate + succinate</text>
        <dbReference type="Rhea" id="RHEA:22608"/>
        <dbReference type="ChEBI" id="CHEBI:15377"/>
        <dbReference type="ChEBI" id="CHEBI:30031"/>
        <dbReference type="ChEBI" id="CHEBI:57609"/>
        <dbReference type="ChEBI" id="CHEBI:58087"/>
        <dbReference type="EC" id="3.5.1.18"/>
    </reaction>
</comment>
<comment type="cofactor">
    <cofactor evidence="1">
        <name>Zn(2+)</name>
        <dbReference type="ChEBI" id="CHEBI:29105"/>
    </cofactor>
    <cofactor evidence="1">
        <name>Co(2+)</name>
        <dbReference type="ChEBI" id="CHEBI:48828"/>
    </cofactor>
    <text evidence="1">Binds 2 Zn(2+) or Co(2+) ions per subunit.</text>
</comment>
<comment type="pathway">
    <text>Amino-acid biosynthesis; L-lysine biosynthesis via DAP pathway; LL-2,6-diaminopimelate from (S)-tetrahydrodipicolinate (succinylase route): step 3/3.</text>
</comment>
<comment type="similarity">
    <text evidence="2">Belongs to the peptidase M20A family.</text>
</comment>
<name>DAPE_STAAN</name>
<accession>Q99SN6</accession>